<protein>
    <recommendedName>
        <fullName>Delta-aminolevulinic acid dehydratase</fullName>
        <shortName>ALADH</shortName>
        <ecNumber evidence="2">4.2.1.24</ecNumber>
    </recommendedName>
    <alternativeName>
        <fullName>Porphobilinogen synthase</fullName>
    </alternativeName>
</protein>
<sequence>MHTADFLDIEPTEISSILSGGYNHPLLREWQSERQLKKNMLIFPLFISDIPDEATPIDSLPNIKRFGINKLVDYVKPLVEKGLRSVILFGVPLKEGTKDPVGTAADDPEGPVIQAIKLLRKEFPELYIICDVCLCEYTSHGHCGVLYDDGTINRERSVSRIAAVAVNYAKAGAHCVAPSDMIDGRIKDIKKGLISAGLAHKTFVLSYAAKFSGNLYGPFRDAACSSPSNGDRKCYQLPQAGRGLARRALARDKNEGADGIIVKPSTFYLDIMRDASEICEDLPICAYHVSGEYAMLHAAAEKGIVDLKSIAFESHEGFLRAGARLIISYFTPEFLDWLSN</sequence>
<comment type="function">
    <text evidence="2">Catalyzes an early step in the biosynthesis of tetrapyrroles. Binds two molecules of 5-aminolevulinate per subunit, each at a distinct site, and catalyzes their condensation to form porphobilinogen.</text>
</comment>
<comment type="catalytic activity">
    <reaction evidence="2">
        <text>2 5-aminolevulinate = porphobilinogen + 2 H2O + H(+)</text>
        <dbReference type="Rhea" id="RHEA:24064"/>
        <dbReference type="ChEBI" id="CHEBI:15377"/>
        <dbReference type="ChEBI" id="CHEBI:15378"/>
        <dbReference type="ChEBI" id="CHEBI:58126"/>
        <dbReference type="ChEBI" id="CHEBI:356416"/>
        <dbReference type="EC" id="4.2.1.24"/>
    </reaction>
</comment>
<comment type="cofactor">
    <cofactor evidence="1">
        <name>Zn(2+)</name>
        <dbReference type="ChEBI" id="CHEBI:29105"/>
    </cofactor>
    <text evidence="1">Binds 1 zinc ion per monomer.</text>
</comment>
<comment type="pathway">
    <text>Porphyrin-containing compound metabolism; protoporphyrin-IX biosynthesis; coproporphyrinogen-III from 5-aminolevulinate: step 1/4.</text>
</comment>
<comment type="subunit">
    <text evidence="1">Homooctamer.</text>
</comment>
<comment type="similarity">
    <text evidence="3">Belongs to the ALAD family.</text>
</comment>
<evidence type="ECO:0000250" key="1"/>
<evidence type="ECO:0000269" key="2">
    <source>
    </source>
</evidence>
<evidence type="ECO:0000305" key="3"/>
<reference key="1">
    <citation type="journal article" date="1998" name="J. Inorg. Biochem.">
        <title>A role for HEM2 in cadmium tolerance.</title>
        <authorList>
            <person name="Hunter T.C."/>
            <person name="Mehra R.K."/>
        </authorList>
    </citation>
    <scope>NUCLEOTIDE SEQUENCE [GENOMIC DNA]</scope>
    <scope>FUNCTION</scope>
    <scope>CATALYTIC ACTIVITY</scope>
    <source>
        <strain>2001-L5</strain>
    </source>
</reference>
<reference key="2">
    <citation type="journal article" date="2004" name="Nature">
        <title>Genome evolution in yeasts.</title>
        <authorList>
            <person name="Dujon B."/>
            <person name="Sherman D."/>
            <person name="Fischer G."/>
            <person name="Durrens P."/>
            <person name="Casaregola S."/>
            <person name="Lafontaine I."/>
            <person name="de Montigny J."/>
            <person name="Marck C."/>
            <person name="Neuveglise C."/>
            <person name="Talla E."/>
            <person name="Goffard N."/>
            <person name="Frangeul L."/>
            <person name="Aigle M."/>
            <person name="Anthouard V."/>
            <person name="Babour A."/>
            <person name="Barbe V."/>
            <person name="Barnay S."/>
            <person name="Blanchin S."/>
            <person name="Beckerich J.-M."/>
            <person name="Beyne E."/>
            <person name="Bleykasten C."/>
            <person name="Boisrame A."/>
            <person name="Boyer J."/>
            <person name="Cattolico L."/>
            <person name="Confanioleri F."/>
            <person name="de Daruvar A."/>
            <person name="Despons L."/>
            <person name="Fabre E."/>
            <person name="Fairhead C."/>
            <person name="Ferry-Dumazet H."/>
            <person name="Groppi A."/>
            <person name="Hantraye F."/>
            <person name="Hennequin C."/>
            <person name="Jauniaux N."/>
            <person name="Joyet P."/>
            <person name="Kachouri R."/>
            <person name="Kerrest A."/>
            <person name="Koszul R."/>
            <person name="Lemaire M."/>
            <person name="Lesur I."/>
            <person name="Ma L."/>
            <person name="Muller H."/>
            <person name="Nicaud J.-M."/>
            <person name="Nikolski M."/>
            <person name="Oztas S."/>
            <person name="Ozier-Kalogeropoulos O."/>
            <person name="Pellenz S."/>
            <person name="Potier S."/>
            <person name="Richard G.-F."/>
            <person name="Straub M.-L."/>
            <person name="Suleau A."/>
            <person name="Swennen D."/>
            <person name="Tekaia F."/>
            <person name="Wesolowski-Louvel M."/>
            <person name="Westhof E."/>
            <person name="Wirth B."/>
            <person name="Zeniou-Meyer M."/>
            <person name="Zivanovic Y."/>
            <person name="Bolotin-Fukuhara M."/>
            <person name="Thierry A."/>
            <person name="Bouchier C."/>
            <person name="Caudron B."/>
            <person name="Scarpelli C."/>
            <person name="Gaillardin C."/>
            <person name="Weissenbach J."/>
            <person name="Wincker P."/>
            <person name="Souciet J.-L."/>
        </authorList>
    </citation>
    <scope>NUCLEOTIDE SEQUENCE [LARGE SCALE GENOMIC DNA]</scope>
    <source>
        <strain>ATCC 2001 / BCRC 20586 / JCM 3761 / NBRC 0622 / NRRL Y-65 / CBS 138</strain>
    </source>
</reference>
<feature type="chain" id="PRO_0000140532" description="Delta-aminolevulinic acid dehydratase">
    <location>
        <begin position="1"/>
        <end position="340"/>
    </location>
</feature>
<feature type="active site" description="Schiff-base intermediate with substrate" evidence="1">
    <location>
        <position position="210"/>
    </location>
</feature>
<feature type="active site" description="Schiff-base intermediate with substrate" evidence="1">
    <location>
        <position position="263"/>
    </location>
</feature>
<feature type="binding site" evidence="1">
    <location>
        <position position="133"/>
    </location>
    <ligand>
        <name>Zn(2+)</name>
        <dbReference type="ChEBI" id="CHEBI:29105"/>
        <note>catalytic</note>
    </ligand>
</feature>
<feature type="binding site" evidence="1">
    <location>
        <position position="135"/>
    </location>
    <ligand>
        <name>Zn(2+)</name>
        <dbReference type="ChEBI" id="CHEBI:29105"/>
        <note>catalytic</note>
    </ligand>
</feature>
<feature type="binding site" evidence="1">
    <location>
        <position position="143"/>
    </location>
    <ligand>
        <name>Zn(2+)</name>
        <dbReference type="ChEBI" id="CHEBI:29105"/>
        <note>catalytic</note>
    </ligand>
</feature>
<feature type="binding site" evidence="1">
    <location>
        <position position="220"/>
    </location>
    <ligand>
        <name>5-aminolevulinate</name>
        <dbReference type="ChEBI" id="CHEBI:356416"/>
        <label>1</label>
    </ligand>
</feature>
<feature type="binding site" evidence="1">
    <location>
        <position position="232"/>
    </location>
    <ligand>
        <name>5-aminolevulinate</name>
        <dbReference type="ChEBI" id="CHEBI:356416"/>
        <label>1</label>
    </ligand>
</feature>
<feature type="binding site" evidence="1">
    <location>
        <position position="290"/>
    </location>
    <ligand>
        <name>5-aminolevulinate</name>
        <dbReference type="ChEBI" id="CHEBI:356416"/>
        <label>2</label>
    </ligand>
</feature>
<feature type="binding site" evidence="1">
    <location>
        <position position="329"/>
    </location>
    <ligand>
        <name>5-aminolevulinate</name>
        <dbReference type="ChEBI" id="CHEBI:356416"/>
        <label>2</label>
    </ligand>
</feature>
<accession>O42768</accession>
<keyword id="KW-0350">Heme biosynthesis</keyword>
<keyword id="KW-0456">Lyase</keyword>
<keyword id="KW-0479">Metal-binding</keyword>
<keyword id="KW-0627">Porphyrin biosynthesis</keyword>
<keyword id="KW-1185">Reference proteome</keyword>
<keyword id="KW-0862">Zinc</keyword>
<dbReference type="EC" id="4.2.1.24" evidence="2"/>
<dbReference type="EMBL" id="AF038566">
    <property type="protein sequence ID" value="AAB94926.1"/>
    <property type="molecule type" value="Genomic_DNA"/>
</dbReference>
<dbReference type="EMBL" id="CR380950">
    <property type="protein sequence ID" value="CAG58584.1"/>
    <property type="molecule type" value="Genomic_DNA"/>
</dbReference>
<dbReference type="RefSeq" id="XP_445673.1">
    <property type="nucleotide sequence ID" value="XM_445673.1"/>
</dbReference>
<dbReference type="SMR" id="O42768"/>
<dbReference type="FunCoup" id="O42768">
    <property type="interactions" value="662"/>
</dbReference>
<dbReference type="STRING" id="284593.O42768"/>
<dbReference type="EnsemblFungi" id="CAGL0D06138g-T">
    <property type="protein sequence ID" value="CAGL0D06138g-T-p1"/>
    <property type="gene ID" value="CAGL0D06138g"/>
</dbReference>
<dbReference type="GeneID" id="2887248"/>
<dbReference type="KEGG" id="cgr:2887248"/>
<dbReference type="CGD" id="CAL0128021">
    <property type="gene designation" value="HEM2"/>
</dbReference>
<dbReference type="VEuPathDB" id="FungiDB:B1J91_D06138g"/>
<dbReference type="VEuPathDB" id="FungiDB:CAGL0D06138g"/>
<dbReference type="eggNOG" id="KOG2794">
    <property type="taxonomic scope" value="Eukaryota"/>
</dbReference>
<dbReference type="HOGENOM" id="CLU_035731_0_1_1"/>
<dbReference type="InParanoid" id="O42768"/>
<dbReference type="OMA" id="YQMDYAN"/>
<dbReference type="UniPathway" id="UPA00251">
    <property type="reaction ID" value="UER00318"/>
</dbReference>
<dbReference type="Proteomes" id="UP000002428">
    <property type="component" value="Chromosome D"/>
</dbReference>
<dbReference type="GO" id="GO:0005829">
    <property type="term" value="C:cytosol"/>
    <property type="evidence" value="ECO:0007669"/>
    <property type="project" value="TreeGrafter"/>
</dbReference>
<dbReference type="GO" id="GO:0004655">
    <property type="term" value="F:porphobilinogen synthase activity"/>
    <property type="evidence" value="ECO:0000315"/>
    <property type="project" value="CGD"/>
</dbReference>
<dbReference type="GO" id="GO:0008270">
    <property type="term" value="F:zinc ion binding"/>
    <property type="evidence" value="ECO:0000250"/>
    <property type="project" value="UniProtKB"/>
</dbReference>
<dbReference type="GO" id="GO:0006783">
    <property type="term" value="P:heme biosynthetic process"/>
    <property type="evidence" value="ECO:0000250"/>
    <property type="project" value="UniProtKB"/>
</dbReference>
<dbReference type="GO" id="GO:0006782">
    <property type="term" value="P:protoporphyrinogen IX biosynthetic process"/>
    <property type="evidence" value="ECO:0007669"/>
    <property type="project" value="UniProtKB-UniPathway"/>
</dbReference>
<dbReference type="CDD" id="cd04824">
    <property type="entry name" value="eu_ALAD_PBGS_cysteine_rich"/>
    <property type="match status" value="1"/>
</dbReference>
<dbReference type="FunFam" id="3.20.20.70:FF:000048">
    <property type="entry name" value="Delta-aminolevulinic acid dehydratase"/>
    <property type="match status" value="1"/>
</dbReference>
<dbReference type="Gene3D" id="3.20.20.70">
    <property type="entry name" value="Aldolase class I"/>
    <property type="match status" value="1"/>
</dbReference>
<dbReference type="InterPro" id="IPR001731">
    <property type="entry name" value="ALAD"/>
</dbReference>
<dbReference type="InterPro" id="IPR030656">
    <property type="entry name" value="ALAD_AS"/>
</dbReference>
<dbReference type="InterPro" id="IPR013785">
    <property type="entry name" value="Aldolase_TIM"/>
</dbReference>
<dbReference type="NCBIfam" id="NF006762">
    <property type="entry name" value="PRK09283.1"/>
    <property type="match status" value="1"/>
</dbReference>
<dbReference type="PANTHER" id="PTHR11458">
    <property type="entry name" value="DELTA-AMINOLEVULINIC ACID DEHYDRATASE"/>
    <property type="match status" value="1"/>
</dbReference>
<dbReference type="PANTHER" id="PTHR11458:SF0">
    <property type="entry name" value="DELTA-AMINOLEVULINIC ACID DEHYDRATASE"/>
    <property type="match status" value="1"/>
</dbReference>
<dbReference type="Pfam" id="PF00490">
    <property type="entry name" value="ALAD"/>
    <property type="match status" value="1"/>
</dbReference>
<dbReference type="PIRSF" id="PIRSF001415">
    <property type="entry name" value="Porphbilin_synth"/>
    <property type="match status" value="1"/>
</dbReference>
<dbReference type="PRINTS" id="PR00144">
    <property type="entry name" value="DALDHYDRTASE"/>
</dbReference>
<dbReference type="SMART" id="SM01004">
    <property type="entry name" value="ALAD"/>
    <property type="match status" value="1"/>
</dbReference>
<dbReference type="SUPFAM" id="SSF51569">
    <property type="entry name" value="Aldolase"/>
    <property type="match status" value="1"/>
</dbReference>
<dbReference type="PROSITE" id="PS00169">
    <property type="entry name" value="D_ALA_DEHYDRATASE"/>
    <property type="match status" value="1"/>
</dbReference>
<name>HEM2_CANGA</name>
<organism>
    <name type="scientific">Candida glabrata (strain ATCC 2001 / BCRC 20586 / JCM 3761 / NBRC 0622 / NRRL Y-65 / CBS 138)</name>
    <name type="common">Yeast</name>
    <name type="synonym">Nakaseomyces glabratus</name>
    <dbReference type="NCBI Taxonomy" id="284593"/>
    <lineage>
        <taxon>Eukaryota</taxon>
        <taxon>Fungi</taxon>
        <taxon>Dikarya</taxon>
        <taxon>Ascomycota</taxon>
        <taxon>Saccharomycotina</taxon>
        <taxon>Saccharomycetes</taxon>
        <taxon>Saccharomycetales</taxon>
        <taxon>Saccharomycetaceae</taxon>
        <taxon>Nakaseomyces</taxon>
    </lineage>
</organism>
<gene>
    <name type="primary">HEM2</name>
    <name type="ordered locus">CAGL0D06138g</name>
</gene>
<proteinExistence type="evidence at protein level"/>